<proteinExistence type="evidence at transcript level"/>
<sequence length="338" mass="36145">MMSYLKQAPYAMNGLGLGGATMDLLHPSVGYPTNPRKQRRERTTFTRTQLDILESLFAKTRYPDIFMREEVALKINLPESRVQVWFKNRRAKCRQQQQQSSTNSKIRPAKKKPSPSRESPGSESSGHFTPPAVSSSSSSSSSSSGSNPSALSGVGLISSSSSGTPVPSIWSPAPVSPVPAPPSLPDISPPASASCMQRAMSSGGGTTGVPSYPMPYNQAPSYAQGYPTSNAASYFGGMDCGSYLAPMTGHAHHHPHAHHSQLSTAAAVSGHHHPHHIGQSSGHHPHHQGYGGTALPFSSSDCLDYKEQVASSWKLNFSSAAADCLDYKDQAAWRFQVL</sequence>
<organism>
    <name type="scientific">Danio rerio</name>
    <name type="common">Zebrafish</name>
    <name type="synonym">Brachydanio rerio</name>
    <dbReference type="NCBI Taxonomy" id="7955"/>
    <lineage>
        <taxon>Eukaryota</taxon>
        <taxon>Metazoa</taxon>
        <taxon>Chordata</taxon>
        <taxon>Craniata</taxon>
        <taxon>Vertebrata</taxon>
        <taxon>Euteleostomi</taxon>
        <taxon>Actinopterygii</taxon>
        <taxon>Neopterygii</taxon>
        <taxon>Teleostei</taxon>
        <taxon>Ostariophysi</taxon>
        <taxon>Cypriniformes</taxon>
        <taxon>Danionidae</taxon>
        <taxon>Danioninae</taxon>
        <taxon>Danio</taxon>
    </lineage>
</organism>
<dbReference type="EMBL" id="D26174">
    <property type="protein sequence ID" value="BAA05160.1"/>
    <property type="molecule type" value="mRNA"/>
</dbReference>
<dbReference type="EMBL" id="BC076432">
    <property type="protein sequence ID" value="AAH76432.1"/>
    <property type="molecule type" value="mRNA"/>
</dbReference>
<dbReference type="EMBL" id="BX855617">
    <property type="protein sequence ID" value="CAX13497.1"/>
    <property type="molecule type" value="Genomic_DNA"/>
</dbReference>
<dbReference type="RefSeq" id="NP_571290.1">
    <property type="nucleotide sequence ID" value="NM_131215.3"/>
</dbReference>
<dbReference type="RefSeq" id="XP_009292547.1">
    <property type="nucleotide sequence ID" value="XM_009294272.2"/>
</dbReference>
<dbReference type="SMR" id="Q90267"/>
<dbReference type="FunCoup" id="Q90267">
    <property type="interactions" value="5"/>
</dbReference>
<dbReference type="STRING" id="7955.ENSDARP00000013327"/>
<dbReference type="PaxDb" id="7955-ENSDARP00000013327"/>
<dbReference type="Ensembl" id="ENSDART00000006538">
    <property type="protein sequence ID" value="ENSDARP00000013327"/>
    <property type="gene ID" value="ENSDARG00000030703"/>
</dbReference>
<dbReference type="GeneID" id="30462"/>
<dbReference type="KEGG" id="dre:30462"/>
<dbReference type="AGR" id="ZFIN:ZDB-GENE-980526-27"/>
<dbReference type="CTD" id="30462"/>
<dbReference type="ZFIN" id="ZDB-GENE-980526-27">
    <property type="gene designation" value="otx2a"/>
</dbReference>
<dbReference type="eggNOG" id="KOG2251">
    <property type="taxonomic scope" value="Eukaryota"/>
</dbReference>
<dbReference type="HOGENOM" id="CLU_064370_0_0_1"/>
<dbReference type="InParanoid" id="Q90267"/>
<dbReference type="OMA" id="YFSGVEC"/>
<dbReference type="OrthoDB" id="6159439at2759"/>
<dbReference type="PhylomeDB" id="Q90267"/>
<dbReference type="TreeFam" id="TF351179"/>
<dbReference type="PRO" id="PR:Q90267"/>
<dbReference type="Proteomes" id="UP000000437">
    <property type="component" value="Chromosome 1"/>
</dbReference>
<dbReference type="Bgee" id="ENSDARG00000030703">
    <property type="expression patterns" value="Expressed in spinal cord neural plate and 35 other cell types or tissues"/>
</dbReference>
<dbReference type="GO" id="GO:0005634">
    <property type="term" value="C:nucleus"/>
    <property type="evidence" value="ECO:0000318"/>
    <property type="project" value="GO_Central"/>
</dbReference>
<dbReference type="GO" id="GO:0000981">
    <property type="term" value="F:DNA-binding transcription factor activity, RNA polymerase II-specific"/>
    <property type="evidence" value="ECO:0000318"/>
    <property type="project" value="GO_Central"/>
</dbReference>
<dbReference type="GO" id="GO:0000978">
    <property type="term" value="F:RNA polymerase II cis-regulatory region sequence-specific DNA binding"/>
    <property type="evidence" value="ECO:0000318"/>
    <property type="project" value="GO_Central"/>
</dbReference>
<dbReference type="GO" id="GO:0021549">
    <property type="term" value="P:cerebellum development"/>
    <property type="evidence" value="ECO:0000316"/>
    <property type="project" value="ZFIN"/>
</dbReference>
<dbReference type="GO" id="GO:0030902">
    <property type="term" value="P:hindbrain development"/>
    <property type="evidence" value="ECO:0000316"/>
    <property type="project" value="ZFIN"/>
</dbReference>
<dbReference type="GO" id="GO:0030901">
    <property type="term" value="P:midbrain development"/>
    <property type="evidence" value="ECO:0000316"/>
    <property type="project" value="ZFIN"/>
</dbReference>
<dbReference type="GO" id="GO:0030917">
    <property type="term" value="P:midbrain-hindbrain boundary development"/>
    <property type="evidence" value="ECO:0000316"/>
    <property type="project" value="ZFIN"/>
</dbReference>
<dbReference type="GO" id="GO:0006357">
    <property type="term" value="P:regulation of transcription by RNA polymerase II"/>
    <property type="evidence" value="ECO:0000318"/>
    <property type="project" value="GO_Central"/>
</dbReference>
<dbReference type="GO" id="GO:0003406">
    <property type="term" value="P:retinal pigment epithelium development"/>
    <property type="evidence" value="ECO:0000316"/>
    <property type="project" value="ZFIN"/>
</dbReference>
<dbReference type="CDD" id="cd00086">
    <property type="entry name" value="homeodomain"/>
    <property type="match status" value="1"/>
</dbReference>
<dbReference type="FunFam" id="1.10.10.60:FF:000142">
    <property type="entry name" value="homeobox protein OTX2 isoform X2"/>
    <property type="match status" value="1"/>
</dbReference>
<dbReference type="Gene3D" id="1.10.10.60">
    <property type="entry name" value="Homeodomain-like"/>
    <property type="match status" value="1"/>
</dbReference>
<dbReference type="InterPro" id="IPR001356">
    <property type="entry name" value="HD"/>
</dbReference>
<dbReference type="InterPro" id="IPR017970">
    <property type="entry name" value="Homeobox_CS"/>
</dbReference>
<dbReference type="InterPro" id="IPR009057">
    <property type="entry name" value="Homeodomain-like_sf"/>
</dbReference>
<dbReference type="InterPro" id="IPR003025">
    <property type="entry name" value="Otx_TF"/>
</dbReference>
<dbReference type="InterPro" id="IPR013851">
    <property type="entry name" value="Otx_TF_C"/>
</dbReference>
<dbReference type="PANTHER" id="PTHR45793">
    <property type="entry name" value="HOMEOBOX PROTEIN"/>
    <property type="match status" value="1"/>
</dbReference>
<dbReference type="PANTHER" id="PTHR45793:SF28">
    <property type="entry name" value="HOMEOBOX PROTEIN OTX1 A"/>
    <property type="match status" value="1"/>
</dbReference>
<dbReference type="Pfam" id="PF00046">
    <property type="entry name" value="Homeodomain"/>
    <property type="match status" value="1"/>
</dbReference>
<dbReference type="Pfam" id="PF03529">
    <property type="entry name" value="TF_Otx"/>
    <property type="match status" value="1"/>
</dbReference>
<dbReference type="PRINTS" id="PR01255">
    <property type="entry name" value="OTXHOMEOBOX"/>
</dbReference>
<dbReference type="SMART" id="SM00389">
    <property type="entry name" value="HOX"/>
    <property type="match status" value="1"/>
</dbReference>
<dbReference type="SUPFAM" id="SSF46689">
    <property type="entry name" value="Homeodomain-like"/>
    <property type="match status" value="1"/>
</dbReference>
<dbReference type="PROSITE" id="PS00027">
    <property type="entry name" value="HOMEOBOX_1"/>
    <property type="match status" value="1"/>
</dbReference>
<dbReference type="PROSITE" id="PS50071">
    <property type="entry name" value="HOMEOBOX_2"/>
    <property type="match status" value="1"/>
</dbReference>
<accession>Q90267</accession>
<accession>B8A5Y6</accession>
<feature type="chain" id="PRO_0000049215" description="Homeobox protein OTX1 A">
    <location>
        <begin position="1"/>
        <end position="338"/>
    </location>
</feature>
<feature type="DNA-binding region" description="Homeobox" evidence="1">
    <location>
        <begin position="38"/>
        <end position="97"/>
    </location>
</feature>
<feature type="region of interest" description="Disordered" evidence="2">
    <location>
        <begin position="91"/>
        <end position="206"/>
    </location>
</feature>
<feature type="region of interest" description="Disordered" evidence="2">
    <location>
        <begin position="261"/>
        <end position="290"/>
    </location>
</feature>
<feature type="compositionally biased region" description="Polar residues" evidence="2">
    <location>
        <begin position="94"/>
        <end position="103"/>
    </location>
</feature>
<feature type="compositionally biased region" description="Low complexity" evidence="2">
    <location>
        <begin position="116"/>
        <end position="126"/>
    </location>
</feature>
<feature type="compositionally biased region" description="Low complexity" evidence="2">
    <location>
        <begin position="134"/>
        <end position="173"/>
    </location>
</feature>
<feature type="compositionally biased region" description="Pro residues" evidence="2">
    <location>
        <begin position="174"/>
        <end position="188"/>
    </location>
</feature>
<evidence type="ECO:0000255" key="1">
    <source>
        <dbReference type="PROSITE-ProRule" id="PRU00108"/>
    </source>
</evidence>
<evidence type="ECO:0000256" key="2">
    <source>
        <dbReference type="SAM" id="MobiDB-lite"/>
    </source>
</evidence>
<evidence type="ECO:0000269" key="3">
    <source>
    </source>
</evidence>
<evidence type="ECO:0000269" key="4">
    <source>
    </source>
</evidence>
<evidence type="ECO:0000269" key="5">
    <source>
    </source>
</evidence>
<evidence type="ECO:0000269" key="6">
    <source>
    </source>
</evidence>
<evidence type="ECO:0000305" key="7"/>
<keyword id="KW-0217">Developmental protein</keyword>
<keyword id="KW-0238">DNA-binding</keyword>
<keyword id="KW-0371">Homeobox</keyword>
<keyword id="KW-0539">Nucleus</keyword>
<keyword id="KW-1185">Reference proteome</keyword>
<reference key="1">
    <citation type="journal article" date="1994" name="Brain Res. Mol. Brain Res.">
        <title>Different spatio-temporal expressions of three otx homeoprotein transcripts during zebrafish embryogenesis.</title>
        <authorList>
            <person name="Mori H."/>
            <person name="Miyazaki Y."/>
            <person name="Morita T."/>
            <person name="Nitta H."/>
            <person name="Mishina M."/>
        </authorList>
    </citation>
    <scope>NUCLEOTIDE SEQUENCE [MRNA]</scope>
    <scope>PUTATIVE FUNCTION</scope>
    <scope>TISSUE SPECIFICITY</scope>
    <source>
        <strain>AB</strain>
    </source>
</reference>
<reference key="2">
    <citation type="journal article" date="2013" name="Nature">
        <title>The zebrafish reference genome sequence and its relationship to the human genome.</title>
        <authorList>
            <person name="Howe K."/>
            <person name="Clark M.D."/>
            <person name="Torroja C.F."/>
            <person name="Torrance J."/>
            <person name="Berthelot C."/>
            <person name="Muffato M."/>
            <person name="Collins J.E."/>
            <person name="Humphray S."/>
            <person name="McLaren K."/>
            <person name="Matthews L."/>
            <person name="McLaren S."/>
            <person name="Sealy I."/>
            <person name="Caccamo M."/>
            <person name="Churcher C."/>
            <person name="Scott C."/>
            <person name="Barrett J.C."/>
            <person name="Koch R."/>
            <person name="Rauch G.J."/>
            <person name="White S."/>
            <person name="Chow W."/>
            <person name="Kilian B."/>
            <person name="Quintais L.T."/>
            <person name="Guerra-Assuncao J.A."/>
            <person name="Zhou Y."/>
            <person name="Gu Y."/>
            <person name="Yen J."/>
            <person name="Vogel J.H."/>
            <person name="Eyre T."/>
            <person name="Redmond S."/>
            <person name="Banerjee R."/>
            <person name="Chi J."/>
            <person name="Fu B."/>
            <person name="Langley E."/>
            <person name="Maguire S.F."/>
            <person name="Laird G.K."/>
            <person name="Lloyd D."/>
            <person name="Kenyon E."/>
            <person name="Donaldson S."/>
            <person name="Sehra H."/>
            <person name="Almeida-King J."/>
            <person name="Loveland J."/>
            <person name="Trevanion S."/>
            <person name="Jones M."/>
            <person name="Quail M."/>
            <person name="Willey D."/>
            <person name="Hunt A."/>
            <person name="Burton J."/>
            <person name="Sims S."/>
            <person name="McLay K."/>
            <person name="Plumb B."/>
            <person name="Davis J."/>
            <person name="Clee C."/>
            <person name="Oliver K."/>
            <person name="Clark R."/>
            <person name="Riddle C."/>
            <person name="Elliot D."/>
            <person name="Threadgold G."/>
            <person name="Harden G."/>
            <person name="Ware D."/>
            <person name="Begum S."/>
            <person name="Mortimore B."/>
            <person name="Kerry G."/>
            <person name="Heath P."/>
            <person name="Phillimore B."/>
            <person name="Tracey A."/>
            <person name="Corby N."/>
            <person name="Dunn M."/>
            <person name="Johnson C."/>
            <person name="Wood J."/>
            <person name="Clark S."/>
            <person name="Pelan S."/>
            <person name="Griffiths G."/>
            <person name="Smith M."/>
            <person name="Glithero R."/>
            <person name="Howden P."/>
            <person name="Barker N."/>
            <person name="Lloyd C."/>
            <person name="Stevens C."/>
            <person name="Harley J."/>
            <person name="Holt K."/>
            <person name="Panagiotidis G."/>
            <person name="Lovell J."/>
            <person name="Beasley H."/>
            <person name="Henderson C."/>
            <person name="Gordon D."/>
            <person name="Auger K."/>
            <person name="Wright D."/>
            <person name="Collins J."/>
            <person name="Raisen C."/>
            <person name="Dyer L."/>
            <person name="Leung K."/>
            <person name="Robertson L."/>
            <person name="Ambridge K."/>
            <person name="Leongamornlert D."/>
            <person name="McGuire S."/>
            <person name="Gilderthorp R."/>
            <person name="Griffiths C."/>
            <person name="Manthravadi D."/>
            <person name="Nichol S."/>
            <person name="Barker G."/>
            <person name="Whitehead S."/>
            <person name="Kay M."/>
            <person name="Brown J."/>
            <person name="Murnane C."/>
            <person name="Gray E."/>
            <person name="Humphries M."/>
            <person name="Sycamore N."/>
            <person name="Barker D."/>
            <person name="Saunders D."/>
            <person name="Wallis J."/>
            <person name="Babbage A."/>
            <person name="Hammond S."/>
            <person name="Mashreghi-Mohammadi M."/>
            <person name="Barr L."/>
            <person name="Martin S."/>
            <person name="Wray P."/>
            <person name="Ellington A."/>
            <person name="Matthews N."/>
            <person name="Ellwood M."/>
            <person name="Woodmansey R."/>
            <person name="Clark G."/>
            <person name="Cooper J."/>
            <person name="Tromans A."/>
            <person name="Grafham D."/>
            <person name="Skuce C."/>
            <person name="Pandian R."/>
            <person name="Andrews R."/>
            <person name="Harrison E."/>
            <person name="Kimberley A."/>
            <person name="Garnett J."/>
            <person name="Fosker N."/>
            <person name="Hall R."/>
            <person name="Garner P."/>
            <person name="Kelly D."/>
            <person name="Bird C."/>
            <person name="Palmer S."/>
            <person name="Gehring I."/>
            <person name="Berger A."/>
            <person name="Dooley C.M."/>
            <person name="Ersan-Urun Z."/>
            <person name="Eser C."/>
            <person name="Geiger H."/>
            <person name="Geisler M."/>
            <person name="Karotki L."/>
            <person name="Kirn A."/>
            <person name="Konantz J."/>
            <person name="Konantz M."/>
            <person name="Oberlander M."/>
            <person name="Rudolph-Geiger S."/>
            <person name="Teucke M."/>
            <person name="Lanz C."/>
            <person name="Raddatz G."/>
            <person name="Osoegawa K."/>
            <person name="Zhu B."/>
            <person name="Rapp A."/>
            <person name="Widaa S."/>
            <person name="Langford C."/>
            <person name="Yang F."/>
            <person name="Schuster S.C."/>
            <person name="Carter N.P."/>
            <person name="Harrow J."/>
            <person name="Ning Z."/>
            <person name="Herrero J."/>
            <person name="Searle S.M."/>
            <person name="Enright A."/>
            <person name="Geisler R."/>
            <person name="Plasterk R.H."/>
            <person name="Lee C."/>
            <person name="Westerfield M."/>
            <person name="de Jong P.J."/>
            <person name="Zon L.I."/>
            <person name="Postlethwait J.H."/>
            <person name="Nusslein-Volhard C."/>
            <person name="Hubbard T.J."/>
            <person name="Roest Crollius H."/>
            <person name="Rogers J."/>
            <person name="Stemple D.L."/>
        </authorList>
    </citation>
    <scope>NUCLEOTIDE SEQUENCE [LARGE SCALE GENOMIC DNA]</scope>
    <source>
        <strain>Tuebingen</strain>
    </source>
</reference>
<reference key="3">
    <citation type="submission" date="2004-07" db="EMBL/GenBank/DDBJ databases">
        <authorList>
            <consortium name="NIH - Zebrafish Gene Collection (ZGC) project"/>
        </authorList>
    </citation>
    <scope>NUCLEOTIDE SEQUENCE [LARGE SCALE MRNA]</scope>
    <source>
        <tissue>Embryo</tissue>
    </source>
</reference>
<reference key="4">
    <citation type="journal article" date="1995" name="Int. J. Dev. Biol.">
        <title>Expression pattern of two otx genes suggests a role in specifying anterior body structures in zebrafish.</title>
        <authorList>
            <person name="Mercier P."/>
            <person name="Simeone A."/>
            <person name="Cotelli F."/>
            <person name="Boncinelli E."/>
        </authorList>
    </citation>
    <scope>NUCLEOTIDE SEQUENCE [GENOMIC DNA] OF 84-338</scope>
    <scope>TISSUE SPECIFICITY</scope>
</reference>
<reference key="5">
    <citation type="journal article" date="2006" name="Development">
        <title>Differentiation of cerebellar cell identities in absence of Fgf signalling in zebrafish Otx morphants.</title>
        <authorList>
            <person name="Foucher I."/>
            <person name="Mione M."/>
            <person name="Simeone A."/>
            <person name="Acampora D."/>
            <person name="Bally-Cuif L."/>
            <person name="Houart C."/>
        </authorList>
    </citation>
    <scope>FUNCTION</scope>
</reference>
<reference key="6">
    <citation type="journal article" date="2007" name="Development">
        <title>Otx1l, Otx2 and Irx1b establish and position the ZLI in the diencephalon.</title>
        <authorList>
            <person name="Scholpp S."/>
            <person name="Foucher I."/>
            <person name="Staudt N."/>
            <person name="Peukert D."/>
            <person name="Lumsden A."/>
            <person name="Houart C."/>
        </authorList>
    </citation>
    <scope>FUNCTION</scope>
</reference>
<comment type="function">
    <text evidence="3 4">Plays a role in very early embryogenesis, gastrulation, and the development and subdivision of the diencephalon and the midbrain. Establishes and positions the zona limitans intrathalamica (ZLI) in the diencephalon. May play a role in the organizer function. Probably acts redundantly with otx2 in early brain development.</text>
</comment>
<comment type="subcellular location">
    <subcellularLocation>
        <location evidence="7">Nucleus</location>
    </subcellularLocation>
</comment>
<comment type="tissue specificity">
    <text evidence="5 6">Embryonic expression is highly dynamic. Detected along the marginal zone of symmetric embryos at 5 hours of development and found at the shield, a primary morphological asymmetry at 6 hours of development. With the extension of the body axis, expression extends to neuroectodermal regions fated to become fore- and mid-brain; found in two stripes at the posterior side of the eye rudiments at 12 hours of development, distributed in the diencephalon, midbrain and the epiphysis at 18 hours of development, and found in the diencephalon and the midbrain at 24 hours of development.</text>
</comment>
<comment type="similarity">
    <text evidence="7">Belongs to the paired homeobox family. Bicoid subfamily.</text>
</comment>
<protein>
    <recommendedName>
        <fullName>Homeobox protein OTX1 A</fullName>
    </recommendedName>
    <alternativeName>
        <fullName>Orthodenticle homolog 1-like</fullName>
    </alternativeName>
    <alternativeName>
        <fullName>zOtx3</fullName>
    </alternativeName>
</protein>
<gene>
    <name type="primary">otx1a</name>
    <name type="synonym">otx1l</name>
    <name type="synonym">otx3</name>
    <name type="ORF">si:dkeyp-123h10.1</name>
</gene>
<name>OTX1A_DANRE</name>